<comment type="function">
    <text evidence="1">Plays a role in peptidoglycan recycling by cleaving the terminal beta-1,4-linked N-acetylglucosamine (GlcNAc) from peptide-linked peptidoglycan fragments, giving rise to free GlcNAc, anhydro-N-acetylmuramic acid and anhydro-N-acetylmuramic acid-linked peptides.</text>
</comment>
<comment type="catalytic activity">
    <reaction evidence="1">
        <text>Hydrolysis of terminal non-reducing N-acetyl-D-hexosamine residues in N-acetyl-beta-D-hexosaminides.</text>
        <dbReference type="EC" id="3.2.1.52"/>
    </reaction>
</comment>
<comment type="pathway">
    <text evidence="1">Cell wall biogenesis; peptidoglycan recycling.</text>
</comment>
<comment type="subcellular location">
    <subcellularLocation>
        <location evidence="1">Cytoplasm</location>
    </subcellularLocation>
</comment>
<comment type="similarity">
    <text evidence="1">Belongs to the glycosyl hydrolase 3 family. NagZ subfamily.</text>
</comment>
<gene>
    <name evidence="1" type="primary">nagZ</name>
    <name type="ordered locus">HS_1132</name>
</gene>
<evidence type="ECO:0000255" key="1">
    <source>
        <dbReference type="HAMAP-Rule" id="MF_00364"/>
    </source>
</evidence>
<keyword id="KW-0131">Cell cycle</keyword>
<keyword id="KW-0132">Cell division</keyword>
<keyword id="KW-0133">Cell shape</keyword>
<keyword id="KW-0961">Cell wall biogenesis/degradation</keyword>
<keyword id="KW-0963">Cytoplasm</keyword>
<keyword id="KW-0326">Glycosidase</keyword>
<keyword id="KW-0378">Hydrolase</keyword>
<keyword id="KW-0573">Peptidoglycan synthesis</keyword>
<proteinExistence type="inferred from homology"/>
<accession>Q0I414</accession>
<protein>
    <recommendedName>
        <fullName evidence="1">Beta-hexosaminidase</fullName>
        <ecNumber evidence="1">3.2.1.52</ecNumber>
    </recommendedName>
    <alternativeName>
        <fullName evidence="1">Beta-N-acetylhexosaminidase</fullName>
    </alternativeName>
    <alternativeName>
        <fullName evidence="1">N-acetyl-beta-glucosaminidase</fullName>
    </alternativeName>
</protein>
<feature type="chain" id="PRO_1000005655" description="Beta-hexosaminidase">
    <location>
        <begin position="1"/>
        <end position="351"/>
    </location>
</feature>
<feature type="active site" description="Proton donor/acceptor" evidence="1">
    <location>
        <position position="177"/>
    </location>
</feature>
<feature type="active site" description="Nucleophile" evidence="1">
    <location>
        <position position="249"/>
    </location>
</feature>
<feature type="binding site" evidence="1">
    <location>
        <position position="62"/>
    </location>
    <ligand>
        <name>substrate</name>
    </ligand>
</feature>
<feature type="binding site" evidence="1">
    <location>
        <position position="70"/>
    </location>
    <ligand>
        <name>substrate</name>
    </ligand>
</feature>
<feature type="binding site" evidence="1">
    <location>
        <position position="134"/>
    </location>
    <ligand>
        <name>substrate</name>
    </ligand>
</feature>
<feature type="binding site" evidence="1">
    <location>
        <begin position="164"/>
        <end position="165"/>
    </location>
    <ligand>
        <name>substrate</name>
    </ligand>
</feature>
<feature type="site" description="Important for catalytic activity" evidence="1">
    <location>
        <position position="175"/>
    </location>
</feature>
<reference key="1">
    <citation type="journal article" date="2007" name="J. Bacteriol.">
        <title>Complete genome sequence of Haemophilus somnus (Histophilus somni) strain 129Pt and comparison to Haemophilus ducreyi 35000HP and Haemophilus influenzae Rd.</title>
        <authorList>
            <person name="Challacombe J.F."/>
            <person name="Duncan A.J."/>
            <person name="Brettin T.S."/>
            <person name="Bruce D."/>
            <person name="Chertkov O."/>
            <person name="Detter J.C."/>
            <person name="Han C.S."/>
            <person name="Misra M."/>
            <person name="Richardson P."/>
            <person name="Tapia R."/>
            <person name="Thayer N."/>
            <person name="Xie G."/>
            <person name="Inzana T.J."/>
        </authorList>
    </citation>
    <scope>NUCLEOTIDE SEQUENCE [LARGE SCALE GENOMIC DNA]</scope>
    <source>
        <strain>129Pt</strain>
    </source>
</reference>
<name>NAGZ_HISS1</name>
<sequence>MSILLIDLSSQELRQEEIELLEHPLVAGLILFSRNFYDIEQIRHLIRSVRQKVKKPLLITVDQEGGRVQRFRQGFTQLPAMQSFACLLSDPQEQQEMAWRAGWQMAAEMTALDIDLSFAPVLDLGHQCKAIGDRSFHYEEKKLIELAEKFIQGMRQIGMSATGKHFPGHGHVLADSHLETPYDDRAKELIFAQDIRPFQSLIKQGLLDAVMPAHVIYTQCDNQPASGSSYWLKEVLRQQLGFQGAIFSDDLGMKGAGFMGDFVARCTQSLQAGCDLLLLCNEPEAVVQVLDRFKPQESQNKRIIRQTRLNKLFKKQRIDWQTLRNQRDWLENHKKLTALQQDWLAYKGYDN</sequence>
<dbReference type="EC" id="3.2.1.52" evidence="1"/>
<dbReference type="EMBL" id="CP000436">
    <property type="protein sequence ID" value="ABI25407.1"/>
    <property type="molecule type" value="Genomic_DNA"/>
</dbReference>
<dbReference type="SMR" id="Q0I414"/>
<dbReference type="CAZy" id="GH3">
    <property type="family name" value="Glycoside Hydrolase Family 3"/>
</dbReference>
<dbReference type="KEGG" id="hso:HS_1132"/>
<dbReference type="eggNOG" id="COG1472">
    <property type="taxonomic scope" value="Bacteria"/>
</dbReference>
<dbReference type="HOGENOM" id="CLU_008392_0_0_6"/>
<dbReference type="UniPathway" id="UPA00544"/>
<dbReference type="GO" id="GO:0005737">
    <property type="term" value="C:cytoplasm"/>
    <property type="evidence" value="ECO:0007669"/>
    <property type="project" value="UniProtKB-SubCell"/>
</dbReference>
<dbReference type="GO" id="GO:0004563">
    <property type="term" value="F:beta-N-acetylhexosaminidase activity"/>
    <property type="evidence" value="ECO:0007669"/>
    <property type="project" value="UniProtKB-UniRule"/>
</dbReference>
<dbReference type="GO" id="GO:0005975">
    <property type="term" value="P:carbohydrate metabolic process"/>
    <property type="evidence" value="ECO:0007669"/>
    <property type="project" value="InterPro"/>
</dbReference>
<dbReference type="GO" id="GO:0051301">
    <property type="term" value="P:cell division"/>
    <property type="evidence" value="ECO:0007669"/>
    <property type="project" value="UniProtKB-KW"/>
</dbReference>
<dbReference type="GO" id="GO:0071555">
    <property type="term" value="P:cell wall organization"/>
    <property type="evidence" value="ECO:0007669"/>
    <property type="project" value="UniProtKB-KW"/>
</dbReference>
<dbReference type="GO" id="GO:0009252">
    <property type="term" value="P:peptidoglycan biosynthetic process"/>
    <property type="evidence" value="ECO:0007669"/>
    <property type="project" value="UniProtKB-KW"/>
</dbReference>
<dbReference type="GO" id="GO:0009254">
    <property type="term" value="P:peptidoglycan turnover"/>
    <property type="evidence" value="ECO:0007669"/>
    <property type="project" value="UniProtKB-UniRule"/>
</dbReference>
<dbReference type="GO" id="GO:0008360">
    <property type="term" value="P:regulation of cell shape"/>
    <property type="evidence" value="ECO:0007669"/>
    <property type="project" value="UniProtKB-KW"/>
</dbReference>
<dbReference type="FunFam" id="3.20.20.300:FF:000001">
    <property type="entry name" value="Beta-hexosaminidase"/>
    <property type="match status" value="1"/>
</dbReference>
<dbReference type="Gene3D" id="3.20.20.300">
    <property type="entry name" value="Glycoside hydrolase, family 3, N-terminal domain"/>
    <property type="match status" value="1"/>
</dbReference>
<dbReference type="HAMAP" id="MF_00364">
    <property type="entry name" value="NagZ"/>
    <property type="match status" value="1"/>
</dbReference>
<dbReference type="InterPro" id="IPR022956">
    <property type="entry name" value="Beta_hexosaminidase_bac"/>
</dbReference>
<dbReference type="InterPro" id="IPR001764">
    <property type="entry name" value="Glyco_hydro_3_N"/>
</dbReference>
<dbReference type="InterPro" id="IPR036962">
    <property type="entry name" value="Glyco_hydro_3_N_sf"/>
</dbReference>
<dbReference type="InterPro" id="IPR017853">
    <property type="entry name" value="Glycoside_hydrolase_SF"/>
</dbReference>
<dbReference type="InterPro" id="IPR050226">
    <property type="entry name" value="NagZ_Beta-hexosaminidase"/>
</dbReference>
<dbReference type="NCBIfam" id="NF003740">
    <property type="entry name" value="PRK05337.1"/>
    <property type="match status" value="1"/>
</dbReference>
<dbReference type="PANTHER" id="PTHR30480:SF13">
    <property type="entry name" value="BETA-HEXOSAMINIDASE"/>
    <property type="match status" value="1"/>
</dbReference>
<dbReference type="PANTHER" id="PTHR30480">
    <property type="entry name" value="BETA-HEXOSAMINIDASE-RELATED"/>
    <property type="match status" value="1"/>
</dbReference>
<dbReference type="Pfam" id="PF00933">
    <property type="entry name" value="Glyco_hydro_3"/>
    <property type="match status" value="1"/>
</dbReference>
<dbReference type="SUPFAM" id="SSF51445">
    <property type="entry name" value="(Trans)glycosidases"/>
    <property type="match status" value="1"/>
</dbReference>
<organism>
    <name type="scientific">Histophilus somni (strain 129Pt)</name>
    <name type="common">Haemophilus somnus</name>
    <dbReference type="NCBI Taxonomy" id="205914"/>
    <lineage>
        <taxon>Bacteria</taxon>
        <taxon>Pseudomonadati</taxon>
        <taxon>Pseudomonadota</taxon>
        <taxon>Gammaproteobacteria</taxon>
        <taxon>Pasteurellales</taxon>
        <taxon>Pasteurellaceae</taxon>
        <taxon>Histophilus</taxon>
    </lineage>
</organism>